<accession>A8A9E3</accession>
<evidence type="ECO:0000255" key="1">
    <source>
        <dbReference type="HAMAP-Rule" id="MF_01571"/>
    </source>
</evidence>
<keyword id="KW-0030">Aminoacyl-tRNA synthetase</keyword>
<keyword id="KW-0067">ATP-binding</keyword>
<keyword id="KW-0963">Cytoplasm</keyword>
<keyword id="KW-0436">Ligase</keyword>
<keyword id="KW-0547">Nucleotide-binding</keyword>
<keyword id="KW-0648">Protein biosynthesis</keyword>
<keyword id="KW-1185">Reference proteome</keyword>
<feature type="chain" id="PRO_0000318773" description="Proline--tRNA ligase">
    <location>
        <begin position="1"/>
        <end position="478"/>
    </location>
</feature>
<dbReference type="EC" id="6.1.1.15" evidence="1"/>
<dbReference type="EMBL" id="CP000816">
    <property type="protein sequence ID" value="ABU81545.1"/>
    <property type="molecule type" value="Genomic_DNA"/>
</dbReference>
<dbReference type="RefSeq" id="WP_011998397.1">
    <property type="nucleotide sequence ID" value="NC_009776.1"/>
</dbReference>
<dbReference type="SMR" id="A8A9E3"/>
<dbReference type="STRING" id="453591.Igni_0362"/>
<dbReference type="GeneID" id="5561887"/>
<dbReference type="KEGG" id="iho:Igni_0362"/>
<dbReference type="eggNOG" id="arCOG00402">
    <property type="taxonomic scope" value="Archaea"/>
</dbReference>
<dbReference type="HOGENOM" id="CLU_001882_4_2_2"/>
<dbReference type="OrthoDB" id="7375at2157"/>
<dbReference type="PhylomeDB" id="A8A9E3"/>
<dbReference type="Proteomes" id="UP000000262">
    <property type="component" value="Chromosome"/>
</dbReference>
<dbReference type="GO" id="GO:0017101">
    <property type="term" value="C:aminoacyl-tRNA synthetase multienzyme complex"/>
    <property type="evidence" value="ECO:0007669"/>
    <property type="project" value="TreeGrafter"/>
</dbReference>
<dbReference type="GO" id="GO:0005737">
    <property type="term" value="C:cytoplasm"/>
    <property type="evidence" value="ECO:0007669"/>
    <property type="project" value="UniProtKB-SubCell"/>
</dbReference>
<dbReference type="GO" id="GO:0005524">
    <property type="term" value="F:ATP binding"/>
    <property type="evidence" value="ECO:0007669"/>
    <property type="project" value="UniProtKB-UniRule"/>
</dbReference>
<dbReference type="GO" id="GO:0004827">
    <property type="term" value="F:proline-tRNA ligase activity"/>
    <property type="evidence" value="ECO:0007669"/>
    <property type="project" value="UniProtKB-UniRule"/>
</dbReference>
<dbReference type="GO" id="GO:0006433">
    <property type="term" value="P:prolyl-tRNA aminoacylation"/>
    <property type="evidence" value="ECO:0007669"/>
    <property type="project" value="UniProtKB-UniRule"/>
</dbReference>
<dbReference type="CDD" id="cd00862">
    <property type="entry name" value="ProRS_anticodon_zinc"/>
    <property type="match status" value="1"/>
</dbReference>
<dbReference type="CDD" id="cd00778">
    <property type="entry name" value="ProRS_core_arch_euk"/>
    <property type="match status" value="1"/>
</dbReference>
<dbReference type="FunFam" id="3.40.50.800:FF:000005">
    <property type="entry name" value="bifunctional glutamate/proline--tRNA ligase"/>
    <property type="match status" value="1"/>
</dbReference>
<dbReference type="FunFam" id="3.30.930.10:FF:000037">
    <property type="entry name" value="Proline--tRNA ligase"/>
    <property type="match status" value="1"/>
</dbReference>
<dbReference type="Gene3D" id="3.40.50.800">
    <property type="entry name" value="Anticodon-binding domain"/>
    <property type="match status" value="1"/>
</dbReference>
<dbReference type="Gene3D" id="3.30.930.10">
    <property type="entry name" value="Bira Bifunctional Protein, Domain 2"/>
    <property type="match status" value="1"/>
</dbReference>
<dbReference type="Gene3D" id="3.30.110.30">
    <property type="entry name" value="C-terminal domain of ProRS"/>
    <property type="match status" value="1"/>
</dbReference>
<dbReference type="HAMAP" id="MF_01571">
    <property type="entry name" value="Pro_tRNA_synth_type3"/>
    <property type="match status" value="1"/>
</dbReference>
<dbReference type="InterPro" id="IPR002314">
    <property type="entry name" value="aa-tRNA-synt_IIb"/>
</dbReference>
<dbReference type="InterPro" id="IPR006195">
    <property type="entry name" value="aa-tRNA-synth_II"/>
</dbReference>
<dbReference type="InterPro" id="IPR045864">
    <property type="entry name" value="aa-tRNA-synth_II/BPL/LPL"/>
</dbReference>
<dbReference type="InterPro" id="IPR004154">
    <property type="entry name" value="Anticodon-bd"/>
</dbReference>
<dbReference type="InterPro" id="IPR036621">
    <property type="entry name" value="Anticodon-bd_dom_sf"/>
</dbReference>
<dbReference type="InterPro" id="IPR002316">
    <property type="entry name" value="Pro-tRNA-ligase_IIa"/>
</dbReference>
<dbReference type="InterPro" id="IPR004499">
    <property type="entry name" value="Pro-tRNA-ligase_IIa_arc-type"/>
</dbReference>
<dbReference type="InterPro" id="IPR016061">
    <property type="entry name" value="Pro-tRNA_ligase_II_C"/>
</dbReference>
<dbReference type="InterPro" id="IPR017449">
    <property type="entry name" value="Pro-tRNA_synth_II"/>
</dbReference>
<dbReference type="InterPro" id="IPR033721">
    <property type="entry name" value="ProRS_core_arch_euk"/>
</dbReference>
<dbReference type="NCBIfam" id="TIGR00408">
    <property type="entry name" value="proS_fam_I"/>
    <property type="match status" value="1"/>
</dbReference>
<dbReference type="PANTHER" id="PTHR43382:SF2">
    <property type="entry name" value="BIFUNCTIONAL GLUTAMATE_PROLINE--TRNA LIGASE"/>
    <property type="match status" value="1"/>
</dbReference>
<dbReference type="PANTHER" id="PTHR43382">
    <property type="entry name" value="PROLYL-TRNA SYNTHETASE"/>
    <property type="match status" value="1"/>
</dbReference>
<dbReference type="Pfam" id="PF03129">
    <property type="entry name" value="HGTP_anticodon"/>
    <property type="match status" value="1"/>
</dbReference>
<dbReference type="Pfam" id="PF09180">
    <property type="entry name" value="ProRS-C_1"/>
    <property type="match status" value="1"/>
</dbReference>
<dbReference type="Pfam" id="PF00587">
    <property type="entry name" value="tRNA-synt_2b"/>
    <property type="match status" value="1"/>
</dbReference>
<dbReference type="PRINTS" id="PR01046">
    <property type="entry name" value="TRNASYNTHPRO"/>
</dbReference>
<dbReference type="SMART" id="SM00946">
    <property type="entry name" value="ProRS-C_1"/>
    <property type="match status" value="1"/>
</dbReference>
<dbReference type="SUPFAM" id="SSF64586">
    <property type="entry name" value="C-terminal domain of ProRS"/>
    <property type="match status" value="1"/>
</dbReference>
<dbReference type="SUPFAM" id="SSF52954">
    <property type="entry name" value="Class II aaRS ABD-related"/>
    <property type="match status" value="1"/>
</dbReference>
<dbReference type="SUPFAM" id="SSF55681">
    <property type="entry name" value="Class II aaRS and biotin synthetases"/>
    <property type="match status" value="1"/>
</dbReference>
<dbReference type="PROSITE" id="PS50862">
    <property type="entry name" value="AA_TRNA_LIGASE_II"/>
    <property type="match status" value="1"/>
</dbReference>
<proteinExistence type="inferred from homology"/>
<comment type="function">
    <text evidence="1">Catalyzes the attachment of proline to tRNA(Pro) in a two-step reaction: proline is first activated by ATP to form Pro-AMP and then transferred to the acceptor end of tRNA(Pro).</text>
</comment>
<comment type="catalytic activity">
    <reaction evidence="1">
        <text>tRNA(Pro) + L-proline + ATP = L-prolyl-tRNA(Pro) + AMP + diphosphate</text>
        <dbReference type="Rhea" id="RHEA:14305"/>
        <dbReference type="Rhea" id="RHEA-COMP:9700"/>
        <dbReference type="Rhea" id="RHEA-COMP:9702"/>
        <dbReference type="ChEBI" id="CHEBI:30616"/>
        <dbReference type="ChEBI" id="CHEBI:33019"/>
        <dbReference type="ChEBI" id="CHEBI:60039"/>
        <dbReference type="ChEBI" id="CHEBI:78442"/>
        <dbReference type="ChEBI" id="CHEBI:78532"/>
        <dbReference type="ChEBI" id="CHEBI:456215"/>
        <dbReference type="EC" id="6.1.1.15"/>
    </reaction>
</comment>
<comment type="subunit">
    <text evidence="1">Homodimer.</text>
</comment>
<comment type="subcellular location">
    <subcellularLocation>
        <location evidence="1">Cytoplasm</location>
    </subcellularLocation>
</comment>
<comment type="domain">
    <text evidence="1">Consists of three domains: the N-terminal catalytic domain, the anticodon-binding domain and the C-terminal extension.</text>
</comment>
<comment type="similarity">
    <text evidence="1">Belongs to the class-II aminoacyl-tRNA synthetase family. ProS type 3 subfamily.</text>
</comment>
<gene>
    <name evidence="1" type="primary">proS</name>
    <name type="ordered locus">Igni_0362</name>
</gene>
<protein>
    <recommendedName>
        <fullName evidence="1">Proline--tRNA ligase</fullName>
        <ecNumber evidence="1">6.1.1.15</ecNumber>
    </recommendedName>
    <alternativeName>
        <fullName evidence="1">Prolyl-tRNA synthetase</fullName>
        <shortName evidence="1">ProRS</shortName>
    </alternativeName>
</protein>
<reference key="1">
    <citation type="journal article" date="2008" name="Genome Biol.">
        <title>A genomic analysis of the archaeal system Ignicoccus hospitalis-Nanoarchaeum equitans.</title>
        <authorList>
            <person name="Podar M."/>
            <person name="Anderson I."/>
            <person name="Makarova K.S."/>
            <person name="Elkins J.G."/>
            <person name="Ivanova N."/>
            <person name="Wall M.A."/>
            <person name="Lykidis A."/>
            <person name="Mavromatis K."/>
            <person name="Sun H."/>
            <person name="Hudson M.E."/>
            <person name="Chen W."/>
            <person name="Deciu C."/>
            <person name="Hutchison D."/>
            <person name="Eads J.R."/>
            <person name="Anderson A."/>
            <person name="Fernandes F."/>
            <person name="Szeto E."/>
            <person name="Lapidus A."/>
            <person name="Kyrpides N.C."/>
            <person name="Saier M.H. Jr."/>
            <person name="Richardson P.M."/>
            <person name="Rachel R."/>
            <person name="Huber H."/>
            <person name="Eisen J.A."/>
            <person name="Koonin E.V."/>
            <person name="Keller M."/>
            <person name="Stetter K.O."/>
        </authorList>
    </citation>
    <scope>NUCLEOTIDE SEQUENCE [LARGE SCALE GENOMIC DNA]</scope>
    <source>
        <strain>KIN4/I / DSM 18386 / JCM 14125</strain>
    </source>
</reference>
<name>SYP_IGNH4</name>
<organism>
    <name type="scientific">Ignicoccus hospitalis (strain KIN4/I / DSM 18386 / JCM 14125)</name>
    <dbReference type="NCBI Taxonomy" id="453591"/>
    <lineage>
        <taxon>Archaea</taxon>
        <taxon>Thermoproteota</taxon>
        <taxon>Thermoprotei</taxon>
        <taxon>Desulfurococcales</taxon>
        <taxon>Desulfurococcaceae</taxon>
        <taxon>Ignicoccus</taxon>
    </lineage>
</organism>
<sequence>MKLNKEENFSEWFDTVLRESGLYDYGRYPVKGMGVWPPFGFKLRKLVLNIIRDLLDSTGHEEVLFPVLIPKTLLEKESEHIRGFEGEVFWVTKGGHEDLDVPLALRPTSETAISYMESFWISSYKQLPMKLYQIVPVYRYETKATRPLIRLREVSTFKEAHTAHESFEGADSQCAEAIEIYKKVFDRLGIPYMISQRPPWDKFAGALYTVAFDTVMPDGRVLQIGTVHHLGQNFSVPFEVRFHTEDGDKDYVWQTSYGLSDRVIASLVAVHGDERGLVLPPEVAPVQVVIVPIPQKEEEQQRKVLEEAKRVEEELKARGWRTVLDDRDELTPGAKYYEWELKGVPFRIEIGKKEVEGDELTVARRDLKKRVKVKKGEIHQRLKEMSDDMLNNMRERAWSFMKSRIKRVRSLEEAKELVEKRYVVELPWCGSKECGLRVDEEVGRVLGVPLDEDAEAKGERCAVCGREAKWWIRVAKTY</sequence>